<evidence type="ECO:0000250" key="1"/>
<evidence type="ECO:0000250" key="2">
    <source>
        <dbReference type="UniProtKB" id="P48549"/>
    </source>
</evidence>
<evidence type="ECO:0000250" key="3">
    <source>
        <dbReference type="UniProtKB" id="P63250"/>
    </source>
</evidence>
<evidence type="ECO:0000250" key="4">
    <source>
        <dbReference type="UniProtKB" id="P63251"/>
    </source>
</evidence>
<evidence type="ECO:0000255" key="5"/>
<evidence type="ECO:0000256" key="6">
    <source>
        <dbReference type="SAM" id="MobiDB-lite"/>
    </source>
</evidence>
<evidence type="ECO:0000269" key="7">
    <source>
    </source>
</evidence>
<evidence type="ECO:0000305" key="8"/>
<gene>
    <name type="primary">KCNJ3</name>
    <name type="synonym">GIRK1</name>
</gene>
<comment type="function">
    <text evidence="4 7">Inward rectifier potassium channels are characterized by a greater tendency to allow potassium to flow into the cell rather than out of it. Their voltage dependence is regulated by the concentration of extracellular potassium; as external potassium is raised, the voltage range of the channel opening shifts to more positive voltages. The inward rectification is mainly due to the blockage of outward current by internal magnesium. This potassium channel is controlled by G proteins (PubMed:8626438). This receptor plays a crucial role in regulating the heartbeat (By similarity).</text>
</comment>
<comment type="catalytic activity">
    <reaction evidence="7">
        <text>K(+)(in) = K(+)(out)</text>
        <dbReference type="Rhea" id="RHEA:29463"/>
        <dbReference type="ChEBI" id="CHEBI:29103"/>
    </reaction>
</comment>
<comment type="activity regulation">
    <text evidence="4">Heteromultimer composed of KCNJ3/GIRK1 and KCNJ5/GIRK4 is activated by phosphatidylinositol 4,5 biphosphate (PtdIns(4,5)P2).</text>
</comment>
<comment type="subunit">
    <text evidence="2 3">Associates with KCNJ5/GIRK4 or KCNJ6/GIRK2 or KCNJ9/GIRK3 to form a G-protein activated heteromultimer pore-forming unit. The resulting inward current is much larger.</text>
</comment>
<comment type="subcellular location">
    <subcellularLocation>
        <location evidence="5">Membrane</location>
        <topology evidence="5">Multi-pass membrane protein</topology>
    </subcellularLocation>
</comment>
<comment type="similarity">
    <text evidence="8">Belongs to the inward rectifier-type potassium channel (TC 1.A.2.1) family. KCNJ3 subfamily.</text>
</comment>
<sequence>MSALRRKLGDEYQVVSTSASGGGLPPPRAAPRGKRQRFVDKNGRCNVQHGNLGGETSRYLSDLFTTLVDLKWRWNLFIFVLTYTVAWLFMASMWWVIAYMRGDLNKAHDDSYTPCVANVYNFPSAFLFFIETEATIGYGYRYITDKCPEGIILFLFQSILGSIVDAFLIGCMFIKMSQPKKRAETLMFSEHAAISMRDGKLTLMFRVGNLRNSHMVSAQIRCKLLKSRQTPEGEFLPLDQLELDVGFSTGADQLFLVSPLTICHVIDAKSPFYDLSQRTMQTEQFEIVVILEGIVETTGMTCQARTSYTEDEVLWGHRFFPVISLEEGFFKVDYSQFHATFEVPTPPYSVKEQEEMLLMSSPLIAPAVSNSKERNNSVECLDGLDEVGIKLPSKLQKITGRDDFPKKLLRISSTTSEKAYSMGDLPMKLQRISSVPGNSEEKLVSKATKMMSDPMSQSVADLPPKLQKLSGGGRMEGNLPPKLRKMNSDRFT</sequence>
<protein>
    <recommendedName>
        <fullName>G protein-activated inward rectifier potassium channel 1</fullName>
        <shortName>GIRK-1</shortName>
    </recommendedName>
    <alternativeName>
        <fullName>Inward rectifier K(+) channel Kir3.1</fullName>
    </alternativeName>
    <alternativeName>
        <fullName>Potassium channel, inwardly rectifying subfamily J member 3</fullName>
    </alternativeName>
</protein>
<feature type="chain" id="PRO_0000154941" description="G protein-activated inward rectifier potassium channel 1">
    <location>
        <begin position="1"/>
        <end position="492"/>
    </location>
</feature>
<feature type="topological domain" description="Cytoplasmic" evidence="1">
    <location>
        <begin position="1"/>
        <end position="72"/>
    </location>
</feature>
<feature type="transmembrane region" description="Helical; Name=M1" evidence="1">
    <location>
        <begin position="73"/>
        <end position="97"/>
    </location>
</feature>
<feature type="topological domain" description="Extracellular" evidence="1">
    <location>
        <begin position="98"/>
        <end position="121"/>
    </location>
</feature>
<feature type="intramembrane region" description="Helical; Pore-forming; Name=H5" evidence="1">
    <location>
        <begin position="122"/>
        <end position="133"/>
    </location>
</feature>
<feature type="intramembrane region" description="Pore-forming" evidence="1">
    <location>
        <begin position="134"/>
        <end position="140"/>
    </location>
</feature>
<feature type="topological domain" description="Extracellular" evidence="1">
    <location>
        <begin position="141"/>
        <end position="149"/>
    </location>
</feature>
<feature type="transmembrane region" description="Helical; Name=M2" evidence="1">
    <location>
        <begin position="150"/>
        <end position="171"/>
    </location>
</feature>
<feature type="topological domain" description="Cytoplasmic" evidence="1">
    <location>
        <begin position="172"/>
        <end position="492"/>
    </location>
</feature>
<feature type="region of interest" description="Disordered" evidence="6">
    <location>
        <begin position="16"/>
        <end position="35"/>
    </location>
</feature>
<feature type="region of interest" description="Polyphosphoinositide (PIP2)-binding" evidence="4">
    <location>
        <begin position="174"/>
        <end position="201"/>
    </location>
</feature>
<feature type="region of interest" description="Disordered" evidence="6">
    <location>
        <begin position="452"/>
        <end position="492"/>
    </location>
</feature>
<feature type="short sequence motif" description="Selectivity filter" evidence="1">
    <location>
        <begin position="135"/>
        <end position="140"/>
    </location>
</feature>
<feature type="site" description="Role in the control of polyamine-mediated channel gating and in the blocking by intracellular magnesium" evidence="1">
    <location>
        <position position="165"/>
    </location>
</feature>
<keyword id="KW-0407">Ion channel</keyword>
<keyword id="KW-0406">Ion transport</keyword>
<keyword id="KW-0472">Membrane</keyword>
<keyword id="KW-0630">Potassium</keyword>
<keyword id="KW-0633">Potassium transport</keyword>
<keyword id="KW-1185">Reference proteome</keyword>
<keyword id="KW-0812">Transmembrane</keyword>
<keyword id="KW-1133">Transmembrane helix</keyword>
<keyword id="KW-0813">Transport</keyword>
<keyword id="KW-0851">Voltage-gated channel</keyword>
<reference key="1">
    <citation type="journal article" date="1996" name="J. Biol. Chem.">
        <title>Specificity of coupling of muscarinic receptor isoforms to a novel chick inward-rectifying acetylcholine-sensitive K+ channel.</title>
        <authorList>
            <person name="Gadbut A.P."/>
            <person name="Riccardi D."/>
            <person name="Wu L.Y."/>
            <person name="Hebert S.C."/>
            <person name="Galper J.B."/>
        </authorList>
    </citation>
    <scope>NUCLEOTIDE SEQUENCE [MRNA]</scope>
    <scope>FUNCTION</scope>
    <scope>TRANSPORTER ACTIVITY</scope>
    <source>
        <tissue>Brain</tissue>
    </source>
</reference>
<organism>
    <name type="scientific">Gallus gallus</name>
    <name type="common">Chicken</name>
    <dbReference type="NCBI Taxonomy" id="9031"/>
    <lineage>
        <taxon>Eukaryota</taxon>
        <taxon>Metazoa</taxon>
        <taxon>Chordata</taxon>
        <taxon>Craniata</taxon>
        <taxon>Vertebrata</taxon>
        <taxon>Euteleostomi</taxon>
        <taxon>Archelosauria</taxon>
        <taxon>Archosauria</taxon>
        <taxon>Dinosauria</taxon>
        <taxon>Saurischia</taxon>
        <taxon>Theropoda</taxon>
        <taxon>Coelurosauria</taxon>
        <taxon>Aves</taxon>
        <taxon>Neognathae</taxon>
        <taxon>Galloanserae</taxon>
        <taxon>Galliformes</taxon>
        <taxon>Phasianidae</taxon>
        <taxon>Phasianinae</taxon>
        <taxon>Gallus</taxon>
    </lineage>
</organism>
<name>KCNJ3_CHICK</name>
<accession>Q90854</accession>
<proteinExistence type="evidence at transcript level"/>
<dbReference type="EMBL" id="L35555">
    <property type="protein sequence ID" value="AAA64786.1"/>
    <property type="molecule type" value="mRNA"/>
</dbReference>
<dbReference type="PIR" id="I50235">
    <property type="entry name" value="I50235"/>
</dbReference>
<dbReference type="RefSeq" id="NP_990735.1">
    <property type="nucleotide sequence ID" value="NM_205404.1"/>
</dbReference>
<dbReference type="SMR" id="Q90854"/>
<dbReference type="FunCoup" id="Q90854">
    <property type="interactions" value="69"/>
</dbReference>
<dbReference type="STRING" id="9031.ENSGALP00000020449"/>
<dbReference type="PaxDb" id="9031-ENSGALP00000020449"/>
<dbReference type="GeneID" id="396369"/>
<dbReference type="KEGG" id="gga:396369"/>
<dbReference type="CTD" id="3760"/>
<dbReference type="VEuPathDB" id="HostDB:geneid_396369"/>
<dbReference type="eggNOG" id="KOG3827">
    <property type="taxonomic scope" value="Eukaryota"/>
</dbReference>
<dbReference type="InParanoid" id="Q90854"/>
<dbReference type="OrthoDB" id="273257at2759"/>
<dbReference type="PhylomeDB" id="Q90854"/>
<dbReference type="PRO" id="PR:Q90854"/>
<dbReference type="Proteomes" id="UP000000539">
    <property type="component" value="Unassembled WGS sequence"/>
</dbReference>
<dbReference type="GO" id="GO:0034702">
    <property type="term" value="C:monoatomic ion channel complex"/>
    <property type="evidence" value="ECO:0007669"/>
    <property type="project" value="UniProtKB-KW"/>
</dbReference>
<dbReference type="GO" id="GO:0005886">
    <property type="term" value="C:plasma membrane"/>
    <property type="evidence" value="ECO:0000318"/>
    <property type="project" value="GO_Central"/>
</dbReference>
<dbReference type="GO" id="GO:0015467">
    <property type="term" value="F:G-protein activated inward rectifier potassium channel activity"/>
    <property type="evidence" value="ECO:0000314"/>
    <property type="project" value="UniProtKB"/>
</dbReference>
<dbReference type="GO" id="GO:0005242">
    <property type="term" value="F:inward rectifier potassium channel activity"/>
    <property type="evidence" value="ECO:0000318"/>
    <property type="project" value="GO_Central"/>
</dbReference>
<dbReference type="GO" id="GO:0005546">
    <property type="term" value="F:phosphatidylinositol-4,5-bisphosphate binding"/>
    <property type="evidence" value="ECO:0000250"/>
    <property type="project" value="UniProtKB"/>
</dbReference>
<dbReference type="GO" id="GO:1990573">
    <property type="term" value="P:potassium ion import across plasma membrane"/>
    <property type="evidence" value="ECO:0000318"/>
    <property type="project" value="GO_Central"/>
</dbReference>
<dbReference type="GO" id="GO:0034765">
    <property type="term" value="P:regulation of monoatomic ion transmembrane transport"/>
    <property type="evidence" value="ECO:0000318"/>
    <property type="project" value="GO_Central"/>
</dbReference>
<dbReference type="FunFam" id="1.10.287.70:FF:000019">
    <property type="entry name" value="G protein-activated inward rectifier potassium channel 1"/>
    <property type="match status" value="1"/>
</dbReference>
<dbReference type="FunFam" id="2.60.40.1400:FF:000006">
    <property type="entry name" value="G protein-activated inward rectifier potassium channel 1"/>
    <property type="match status" value="1"/>
</dbReference>
<dbReference type="Gene3D" id="1.10.287.70">
    <property type="match status" value="1"/>
</dbReference>
<dbReference type="Gene3D" id="2.60.40.1400">
    <property type="entry name" value="G protein-activated inward rectifier potassium channel 1"/>
    <property type="match status" value="1"/>
</dbReference>
<dbReference type="InterPro" id="IPR014756">
    <property type="entry name" value="Ig_E-set"/>
</dbReference>
<dbReference type="InterPro" id="IPR041647">
    <property type="entry name" value="IRK_C"/>
</dbReference>
<dbReference type="InterPro" id="IPR016449">
    <property type="entry name" value="K_chnl_inward-rec_Kir"/>
</dbReference>
<dbReference type="InterPro" id="IPR003274">
    <property type="entry name" value="K_chnl_inward-rec_Kir3.1"/>
</dbReference>
<dbReference type="InterPro" id="IPR013518">
    <property type="entry name" value="K_chnl_inward-rec_Kir_cyto"/>
</dbReference>
<dbReference type="InterPro" id="IPR040445">
    <property type="entry name" value="Kir_TM"/>
</dbReference>
<dbReference type="PANTHER" id="PTHR11767:SF16">
    <property type="entry name" value="G PROTEIN-ACTIVATED INWARD RECTIFIER POTASSIUM CHANNEL 1"/>
    <property type="match status" value="1"/>
</dbReference>
<dbReference type="PANTHER" id="PTHR11767">
    <property type="entry name" value="INWARD RECTIFIER POTASSIUM CHANNEL"/>
    <property type="match status" value="1"/>
</dbReference>
<dbReference type="Pfam" id="PF01007">
    <property type="entry name" value="IRK"/>
    <property type="match status" value="1"/>
</dbReference>
<dbReference type="Pfam" id="PF17655">
    <property type="entry name" value="IRK_C"/>
    <property type="match status" value="1"/>
</dbReference>
<dbReference type="PRINTS" id="PR01327">
    <property type="entry name" value="KIR31CHANNEL"/>
</dbReference>
<dbReference type="PRINTS" id="PR01320">
    <property type="entry name" value="KIRCHANNEL"/>
</dbReference>
<dbReference type="SUPFAM" id="SSF81296">
    <property type="entry name" value="E set domains"/>
    <property type="match status" value="1"/>
</dbReference>
<dbReference type="SUPFAM" id="SSF81324">
    <property type="entry name" value="Voltage-gated potassium channels"/>
    <property type="match status" value="1"/>
</dbReference>